<dbReference type="EC" id="2.3.1.40" evidence="1"/>
<dbReference type="EC" id="6.2.1.20" evidence="1"/>
<dbReference type="EMBL" id="CP000647">
    <property type="protein sequence ID" value="ABR78643.1"/>
    <property type="molecule type" value="Genomic_DNA"/>
</dbReference>
<dbReference type="RefSeq" id="WP_002915977.1">
    <property type="nucleotide sequence ID" value="NC_009648.1"/>
</dbReference>
<dbReference type="SMR" id="A6TDH2"/>
<dbReference type="STRING" id="272620.KPN_03245"/>
<dbReference type="PaxDb" id="272620-KPN_03245"/>
<dbReference type="EnsemblBacteria" id="ABR78643">
    <property type="protein sequence ID" value="ABR78643"/>
    <property type="gene ID" value="KPN_03245"/>
</dbReference>
<dbReference type="KEGG" id="kpn:KPN_03245"/>
<dbReference type="HOGENOM" id="CLU_000022_59_8_6"/>
<dbReference type="Proteomes" id="UP000000265">
    <property type="component" value="Chromosome"/>
</dbReference>
<dbReference type="GO" id="GO:0005886">
    <property type="term" value="C:plasma membrane"/>
    <property type="evidence" value="ECO:0007669"/>
    <property type="project" value="UniProtKB-SubCell"/>
</dbReference>
<dbReference type="GO" id="GO:0008779">
    <property type="term" value="F:acyl-[acyl-carrier-protein]-phospholipid O-acyltransferase activity"/>
    <property type="evidence" value="ECO:0007669"/>
    <property type="project" value="UniProtKB-UniRule"/>
</dbReference>
<dbReference type="GO" id="GO:0005524">
    <property type="term" value="F:ATP binding"/>
    <property type="evidence" value="ECO:0007669"/>
    <property type="project" value="UniProtKB-KW"/>
</dbReference>
<dbReference type="GO" id="GO:0008922">
    <property type="term" value="F:long-chain fatty acid [acyl-carrier-protein] ligase activity"/>
    <property type="evidence" value="ECO:0007669"/>
    <property type="project" value="UniProtKB-UniRule"/>
</dbReference>
<dbReference type="GO" id="GO:0031956">
    <property type="term" value="F:medium-chain fatty acid-CoA ligase activity"/>
    <property type="evidence" value="ECO:0007669"/>
    <property type="project" value="TreeGrafter"/>
</dbReference>
<dbReference type="GO" id="GO:0006631">
    <property type="term" value="P:fatty acid metabolic process"/>
    <property type="evidence" value="ECO:0007669"/>
    <property type="project" value="InterPro"/>
</dbReference>
<dbReference type="GO" id="GO:0008654">
    <property type="term" value="P:phospholipid biosynthetic process"/>
    <property type="evidence" value="ECO:0007669"/>
    <property type="project" value="InterPro"/>
</dbReference>
<dbReference type="CDD" id="cd07989">
    <property type="entry name" value="LPLAT_AGPAT-like"/>
    <property type="match status" value="1"/>
</dbReference>
<dbReference type="Gene3D" id="3.30.300.30">
    <property type="match status" value="1"/>
</dbReference>
<dbReference type="Gene3D" id="3.40.50.12780">
    <property type="entry name" value="N-terminal domain of ligase-like"/>
    <property type="match status" value="1"/>
</dbReference>
<dbReference type="HAMAP" id="MF_01162">
    <property type="entry name" value="Aas"/>
    <property type="match status" value="1"/>
</dbReference>
<dbReference type="InterPro" id="IPR023775">
    <property type="entry name" value="Aas"/>
</dbReference>
<dbReference type="InterPro" id="IPR045851">
    <property type="entry name" value="AMP-bd_C_sf"/>
</dbReference>
<dbReference type="InterPro" id="IPR020845">
    <property type="entry name" value="AMP-binding_CS"/>
</dbReference>
<dbReference type="InterPro" id="IPR000873">
    <property type="entry name" value="AMP-dep_synth/lig_dom"/>
</dbReference>
<dbReference type="InterPro" id="IPR042099">
    <property type="entry name" value="ANL_N_sf"/>
</dbReference>
<dbReference type="InterPro" id="IPR002123">
    <property type="entry name" value="Plipid/glycerol_acylTrfase"/>
</dbReference>
<dbReference type="NCBIfam" id="NF005959">
    <property type="entry name" value="PRK08043.1"/>
    <property type="match status" value="1"/>
</dbReference>
<dbReference type="PANTHER" id="PTHR43201">
    <property type="entry name" value="ACYL-COA SYNTHETASE"/>
    <property type="match status" value="1"/>
</dbReference>
<dbReference type="PANTHER" id="PTHR43201:SF5">
    <property type="entry name" value="MEDIUM-CHAIN ACYL-COA LIGASE ACSF2, MITOCHONDRIAL"/>
    <property type="match status" value="1"/>
</dbReference>
<dbReference type="Pfam" id="PF01553">
    <property type="entry name" value="Acyltransferase"/>
    <property type="match status" value="1"/>
</dbReference>
<dbReference type="Pfam" id="PF00501">
    <property type="entry name" value="AMP-binding"/>
    <property type="match status" value="1"/>
</dbReference>
<dbReference type="SMART" id="SM00563">
    <property type="entry name" value="PlsC"/>
    <property type="match status" value="1"/>
</dbReference>
<dbReference type="SUPFAM" id="SSF56801">
    <property type="entry name" value="Acetyl-CoA synthetase-like"/>
    <property type="match status" value="1"/>
</dbReference>
<dbReference type="SUPFAM" id="SSF69593">
    <property type="entry name" value="Glycerol-3-phosphate (1)-acyltransferase"/>
    <property type="match status" value="1"/>
</dbReference>
<dbReference type="PROSITE" id="PS00455">
    <property type="entry name" value="AMP_BINDING"/>
    <property type="match status" value="1"/>
</dbReference>
<proteinExistence type="inferred from homology"/>
<keyword id="KW-0012">Acyltransferase</keyword>
<keyword id="KW-0067">ATP-binding</keyword>
<keyword id="KW-0997">Cell inner membrane</keyword>
<keyword id="KW-1003">Cell membrane</keyword>
<keyword id="KW-0436">Ligase</keyword>
<keyword id="KW-0472">Membrane</keyword>
<keyword id="KW-0511">Multifunctional enzyme</keyword>
<keyword id="KW-0547">Nucleotide-binding</keyword>
<keyword id="KW-0808">Transferase</keyword>
<keyword id="KW-0812">Transmembrane</keyword>
<keyword id="KW-1133">Transmembrane helix</keyword>
<feature type="chain" id="PRO_1000065641" description="Bifunctional protein Aas">
    <location>
        <begin position="1"/>
        <end position="719"/>
    </location>
</feature>
<feature type="transmembrane region" description="Helical" evidence="1">
    <location>
        <begin position="258"/>
        <end position="277"/>
    </location>
</feature>
<feature type="transmembrane region" description="Helical" evidence="1">
    <location>
        <begin position="409"/>
        <end position="433"/>
    </location>
</feature>
<feature type="region of interest" description="Acyltransferase">
    <location>
        <begin position="15"/>
        <end position="138"/>
    </location>
</feature>
<feature type="region of interest" description="AMP-binding">
    <location>
        <begin position="233"/>
        <end position="646"/>
    </location>
</feature>
<feature type="active site" evidence="1">
    <location>
        <position position="36"/>
    </location>
</feature>
<name>AAS_KLEP7</name>
<protein>
    <recommendedName>
        <fullName evidence="1">Bifunctional protein Aas</fullName>
    </recommendedName>
    <domain>
        <recommendedName>
            <fullName evidence="1">2-acylglycerophosphoethanolamine acyltransferase</fullName>
            <ecNumber evidence="1">2.3.1.40</ecNumber>
        </recommendedName>
        <alternativeName>
            <fullName evidence="1">2-acyl-GPE acyltransferase</fullName>
        </alternativeName>
        <alternativeName>
            <fullName evidence="1">Acyl-[acyl-carrier-protein]--phospholipid O-acyltransferase</fullName>
        </alternativeName>
    </domain>
    <domain>
        <recommendedName>
            <fullName evidence="1">Acyl-[acyl-carrier-protein] synthetase</fullName>
            <ecNumber evidence="1">6.2.1.20</ecNumber>
        </recommendedName>
        <alternativeName>
            <fullName evidence="1">Acyl-ACP synthetase</fullName>
        </alternativeName>
        <alternativeName>
            <fullName evidence="1">Long-chain-fatty-acid--[acyl-carrier-protein] ligase</fullName>
        </alternativeName>
    </domain>
</protein>
<evidence type="ECO:0000255" key="1">
    <source>
        <dbReference type="HAMAP-Rule" id="MF_01162"/>
    </source>
</evidence>
<comment type="function">
    <text evidence="1">Plays a role in lysophospholipid acylation. Transfers fatty acids to the 1-position via an enzyme-bound acyl-ACP intermediate in the presence of ATP and magnesium. Its physiological function is to regenerate phosphatidylethanolamine from 2-acyl-glycero-3-phosphoethanolamine (2-acyl-GPE) formed by transacylation reactions or degradation by phospholipase A1.</text>
</comment>
<comment type="catalytic activity">
    <reaction evidence="1">
        <text>a 2-acyl-sn-glycero-3-phosphoethanolamine + a fatty acyl-[ACP] = a 1,2-diacyl-sn-glycero-3-phosphoethanolamine + holo-[ACP]</text>
        <dbReference type="Rhea" id="RHEA:10304"/>
        <dbReference type="Rhea" id="RHEA-COMP:9685"/>
        <dbReference type="Rhea" id="RHEA-COMP:14125"/>
        <dbReference type="ChEBI" id="CHEBI:64479"/>
        <dbReference type="ChEBI" id="CHEBI:64612"/>
        <dbReference type="ChEBI" id="CHEBI:65213"/>
        <dbReference type="ChEBI" id="CHEBI:138651"/>
        <dbReference type="EC" id="2.3.1.40"/>
    </reaction>
</comment>
<comment type="catalytic activity">
    <reaction evidence="1">
        <text>a long-chain fatty acid + holo-[ACP] + ATP = a long-chain fatty acyl-[ACP] + AMP + diphosphate</text>
        <dbReference type="Rhea" id="RHEA:45588"/>
        <dbReference type="Rhea" id="RHEA-COMP:9685"/>
        <dbReference type="Rhea" id="RHEA-COMP:12682"/>
        <dbReference type="ChEBI" id="CHEBI:30616"/>
        <dbReference type="ChEBI" id="CHEBI:33019"/>
        <dbReference type="ChEBI" id="CHEBI:57560"/>
        <dbReference type="ChEBI" id="CHEBI:64479"/>
        <dbReference type="ChEBI" id="CHEBI:133243"/>
        <dbReference type="ChEBI" id="CHEBI:456215"/>
        <dbReference type="EC" id="6.2.1.20"/>
    </reaction>
</comment>
<comment type="subcellular location">
    <subcellularLocation>
        <location evidence="1">Cell inner membrane</location>
        <topology evidence="1">Multi-pass membrane protein</topology>
    </subcellularLocation>
</comment>
<comment type="similarity">
    <text evidence="1">In the N-terminal section; belongs to the 2-acyl-GPE acetyltransferase family.</text>
</comment>
<comment type="similarity">
    <text evidence="1">In the C-terminal section; belongs to the ATP-dependent AMP-binding enzyme family.</text>
</comment>
<reference key="1">
    <citation type="submission" date="2006-09" db="EMBL/GenBank/DDBJ databases">
        <authorList>
            <consortium name="The Klebsiella pneumonia Genome Sequencing Project"/>
            <person name="McClelland M."/>
            <person name="Sanderson E.K."/>
            <person name="Spieth J."/>
            <person name="Clifton W.S."/>
            <person name="Latreille P."/>
            <person name="Sabo A."/>
            <person name="Pepin K."/>
            <person name="Bhonagiri V."/>
            <person name="Porwollik S."/>
            <person name="Ali J."/>
            <person name="Wilson R.K."/>
        </authorList>
    </citation>
    <scope>NUCLEOTIDE SEQUENCE [LARGE SCALE GENOMIC DNA]</scope>
    <source>
        <strain>ATCC 700721 / MGH 78578</strain>
    </source>
</reference>
<sequence length="719" mass="80214">MLLGFFRLLFKGLYRVRLTGDTQALYQQKVLITPNHVSFLDGILLALFLPVRPVFAVYTSISQRWFMRALTPIIDFVPLDPTKPMSIKHLVRLIEQGRPVVIFPEGRISVSGSLMKIYDGAAFVAAKSQATIVPLRIEGAELTPFSRLKGLVKRRLFPRIQLHLLPPTHLPMPEAPRARDRRKIAGEMLHQIMMEARMAVRPRETLYESLLAAQDRFGARKPCVEDINFQPDTYRKLLTKTLFVARILEKYSQPGEKIGLMLPNAGISAAVIFGAIARGRIPAMMNYTAGVKGLSSAIAAAELNTIFTSRTFLDKGKLWHLPEQLTQVRWVFLEDLKGDITLADKLWIFAHLLAPRLAQVKQQPEDAAMILFTSGSEGNPKGVVHSHKSLLSNVEQIKTIADFTANDRFMSALPLFHSFGLTVGLLTPLLTGAEVFLYPSPLHYRVVPELVYDRNCTVLFGTSTFLANYARFANPYDFYRLRYVVAGAEKLQESTKQLWQDKFGLRILEGYGVTECAPVVSINVPMAAKVGTVGRILPGMDARLLAMPGIDQGGRLQLKGPNIMKGYLRVENPGVLEAPAAENQHGEMEAGWYDTGDIVTFDEQGYVRIQGRAKRFAKIAGEMISLEMVEQVALGASPDKMHATAIKQDASKGEALVLFTTDNELTREALLRYARQHGVPELAVPRDIRWLKQLPVLGSGKPDYVTLKNMVDEAETTHE</sequence>
<accession>A6TDH2</accession>
<gene>
    <name evidence="1" type="primary">aas</name>
    <name type="ordered locus">KPN78578_31820</name>
    <name type="ORF">KPN_03245</name>
</gene>
<organism>
    <name type="scientific">Klebsiella pneumoniae subsp. pneumoniae (strain ATCC 700721 / MGH 78578)</name>
    <dbReference type="NCBI Taxonomy" id="272620"/>
    <lineage>
        <taxon>Bacteria</taxon>
        <taxon>Pseudomonadati</taxon>
        <taxon>Pseudomonadota</taxon>
        <taxon>Gammaproteobacteria</taxon>
        <taxon>Enterobacterales</taxon>
        <taxon>Enterobacteriaceae</taxon>
        <taxon>Klebsiella/Raoultella group</taxon>
        <taxon>Klebsiella</taxon>
        <taxon>Klebsiella pneumoniae complex</taxon>
    </lineage>
</organism>